<accession>A9N8K2</accession>
<comment type="function">
    <text evidence="1">Binds directly to 23S ribosomal RNA and is necessary for the in vitro assembly process of the 50S ribosomal subunit. It is not involved in the protein synthesizing functions of that subunit.</text>
</comment>
<comment type="similarity">
    <text evidence="1">Belongs to the bacterial ribosomal protein bL20 family.</text>
</comment>
<organism>
    <name type="scientific">Coxiella burnetii (strain RSA 331 / Henzerling II)</name>
    <dbReference type="NCBI Taxonomy" id="360115"/>
    <lineage>
        <taxon>Bacteria</taxon>
        <taxon>Pseudomonadati</taxon>
        <taxon>Pseudomonadota</taxon>
        <taxon>Gammaproteobacteria</taxon>
        <taxon>Legionellales</taxon>
        <taxon>Coxiellaceae</taxon>
        <taxon>Coxiella</taxon>
    </lineage>
</organism>
<feature type="chain" id="PRO_1000080068" description="Large ribosomal subunit protein bL20">
    <location>
        <begin position="1"/>
        <end position="119"/>
    </location>
</feature>
<dbReference type="EMBL" id="CP000890">
    <property type="protein sequence ID" value="ABX77535.1"/>
    <property type="molecule type" value="Genomic_DNA"/>
</dbReference>
<dbReference type="RefSeq" id="WP_005770935.1">
    <property type="nucleotide sequence ID" value="NC_010117.1"/>
</dbReference>
<dbReference type="SMR" id="A9N8K2"/>
<dbReference type="KEGG" id="cbs:COXBURSA331_A1475"/>
<dbReference type="HOGENOM" id="CLU_123265_0_1_6"/>
<dbReference type="GO" id="GO:1990904">
    <property type="term" value="C:ribonucleoprotein complex"/>
    <property type="evidence" value="ECO:0007669"/>
    <property type="project" value="UniProtKB-KW"/>
</dbReference>
<dbReference type="GO" id="GO:0005840">
    <property type="term" value="C:ribosome"/>
    <property type="evidence" value="ECO:0007669"/>
    <property type="project" value="UniProtKB-KW"/>
</dbReference>
<dbReference type="GO" id="GO:0019843">
    <property type="term" value="F:rRNA binding"/>
    <property type="evidence" value="ECO:0007669"/>
    <property type="project" value="UniProtKB-UniRule"/>
</dbReference>
<dbReference type="GO" id="GO:0003735">
    <property type="term" value="F:structural constituent of ribosome"/>
    <property type="evidence" value="ECO:0007669"/>
    <property type="project" value="InterPro"/>
</dbReference>
<dbReference type="GO" id="GO:0000027">
    <property type="term" value="P:ribosomal large subunit assembly"/>
    <property type="evidence" value="ECO:0007669"/>
    <property type="project" value="UniProtKB-UniRule"/>
</dbReference>
<dbReference type="GO" id="GO:0006412">
    <property type="term" value="P:translation"/>
    <property type="evidence" value="ECO:0007669"/>
    <property type="project" value="InterPro"/>
</dbReference>
<dbReference type="CDD" id="cd07026">
    <property type="entry name" value="Ribosomal_L20"/>
    <property type="match status" value="1"/>
</dbReference>
<dbReference type="FunFam" id="1.10.1900.20:FF:000001">
    <property type="entry name" value="50S ribosomal protein L20"/>
    <property type="match status" value="1"/>
</dbReference>
<dbReference type="Gene3D" id="6.10.160.10">
    <property type="match status" value="1"/>
</dbReference>
<dbReference type="Gene3D" id="1.10.1900.20">
    <property type="entry name" value="Ribosomal protein L20"/>
    <property type="match status" value="1"/>
</dbReference>
<dbReference type="HAMAP" id="MF_00382">
    <property type="entry name" value="Ribosomal_bL20"/>
    <property type="match status" value="1"/>
</dbReference>
<dbReference type="InterPro" id="IPR005813">
    <property type="entry name" value="Ribosomal_bL20"/>
</dbReference>
<dbReference type="InterPro" id="IPR049946">
    <property type="entry name" value="RIBOSOMAL_L20_CS"/>
</dbReference>
<dbReference type="InterPro" id="IPR035566">
    <property type="entry name" value="Ribosomal_protein_bL20_C"/>
</dbReference>
<dbReference type="NCBIfam" id="TIGR01032">
    <property type="entry name" value="rplT_bact"/>
    <property type="match status" value="1"/>
</dbReference>
<dbReference type="PANTHER" id="PTHR10986">
    <property type="entry name" value="39S RIBOSOMAL PROTEIN L20"/>
    <property type="match status" value="1"/>
</dbReference>
<dbReference type="Pfam" id="PF00453">
    <property type="entry name" value="Ribosomal_L20"/>
    <property type="match status" value="1"/>
</dbReference>
<dbReference type="PRINTS" id="PR00062">
    <property type="entry name" value="RIBOSOMALL20"/>
</dbReference>
<dbReference type="SUPFAM" id="SSF74731">
    <property type="entry name" value="Ribosomal protein L20"/>
    <property type="match status" value="1"/>
</dbReference>
<dbReference type="PROSITE" id="PS00937">
    <property type="entry name" value="RIBOSOMAL_L20"/>
    <property type="match status" value="1"/>
</dbReference>
<proteinExistence type="inferred from homology"/>
<keyword id="KW-0687">Ribonucleoprotein</keyword>
<keyword id="KW-0689">Ribosomal protein</keyword>
<keyword id="KW-0694">RNA-binding</keyword>
<keyword id="KW-0699">rRNA-binding</keyword>
<reference key="1">
    <citation type="submission" date="2007-11" db="EMBL/GenBank/DDBJ databases">
        <title>Genome sequencing of phylogenetically and phenotypically diverse Coxiella burnetii isolates.</title>
        <authorList>
            <person name="Seshadri R."/>
            <person name="Samuel J.E."/>
        </authorList>
    </citation>
    <scope>NUCLEOTIDE SEQUENCE [LARGE SCALE GENOMIC DNA]</scope>
    <source>
        <strain>RSA 331 / Henzerling II</strain>
    </source>
</reference>
<gene>
    <name evidence="1" type="primary">rplT</name>
    <name type="ordered locus">COXBURSA331_A1475</name>
</gene>
<sequence length="119" mass="13443">MPRVKRGVTARARHKKVLTKAKGYYGARSRVFRVAKQAVIKAAQYAYRDRKQRKRQFRALWIVRINAAAREHGLSYSRLINGLMKASVAIDRKNLAELAVYDKAAFGKLAEKAKQALGG</sequence>
<name>RL20_COXBR</name>
<protein>
    <recommendedName>
        <fullName evidence="1">Large ribosomal subunit protein bL20</fullName>
    </recommendedName>
    <alternativeName>
        <fullName evidence="2">50S ribosomal protein L20</fullName>
    </alternativeName>
</protein>
<evidence type="ECO:0000255" key="1">
    <source>
        <dbReference type="HAMAP-Rule" id="MF_00382"/>
    </source>
</evidence>
<evidence type="ECO:0000305" key="2"/>